<comment type="function">
    <text evidence="1">Part of an energy-coupled inorganic carbon pump.</text>
</comment>
<comment type="subunit">
    <text evidence="1">Forms a complex with DabA.</text>
</comment>
<comment type="subcellular location">
    <subcellularLocation>
        <location evidence="1">Cell membrane</location>
        <topology evidence="1">Multi-pass membrane protein</topology>
    </subcellularLocation>
</comment>
<comment type="similarity">
    <text evidence="1">Belongs to the inorganic carbon transporter (TC 9.A.2) DabB family.</text>
</comment>
<organism>
    <name type="scientific">Bacillus subtilis (strain 168)</name>
    <dbReference type="NCBI Taxonomy" id="224308"/>
    <lineage>
        <taxon>Bacteria</taxon>
        <taxon>Bacillati</taxon>
        <taxon>Bacillota</taxon>
        <taxon>Bacilli</taxon>
        <taxon>Bacillales</taxon>
        <taxon>Bacillaceae</taxon>
        <taxon>Bacillus</taxon>
    </lineage>
</organism>
<evidence type="ECO:0000255" key="1">
    <source>
        <dbReference type="HAMAP-Rule" id="MF_00862"/>
    </source>
</evidence>
<feature type="chain" id="PRO_0000118225" description="Probable inorganic carbon transporter subunit DabB">
    <location>
        <begin position="1"/>
        <end position="505"/>
    </location>
</feature>
<feature type="transmembrane region" description="Helical" evidence="1">
    <location>
        <begin position="9"/>
        <end position="29"/>
    </location>
</feature>
<feature type="transmembrane region" description="Helical" evidence="1">
    <location>
        <begin position="37"/>
        <end position="57"/>
    </location>
</feature>
<feature type="transmembrane region" description="Helical" evidence="1">
    <location>
        <begin position="68"/>
        <end position="88"/>
    </location>
</feature>
<feature type="transmembrane region" description="Helical" evidence="1">
    <location>
        <begin position="105"/>
        <end position="123"/>
    </location>
</feature>
<feature type="transmembrane region" description="Helical" evidence="1">
    <location>
        <begin position="162"/>
        <end position="182"/>
    </location>
</feature>
<feature type="transmembrane region" description="Helical" evidence="1">
    <location>
        <begin position="204"/>
        <end position="224"/>
    </location>
</feature>
<feature type="transmembrane region" description="Helical" evidence="1">
    <location>
        <begin position="231"/>
        <end position="251"/>
    </location>
</feature>
<feature type="transmembrane region" description="Helical" evidence="1">
    <location>
        <begin position="259"/>
        <end position="279"/>
    </location>
</feature>
<feature type="transmembrane region" description="Helical" evidence="1">
    <location>
        <begin position="303"/>
        <end position="323"/>
    </location>
</feature>
<feature type="transmembrane region" description="Helical" evidence="1">
    <location>
        <begin position="355"/>
        <end position="375"/>
    </location>
</feature>
<feature type="transmembrane region" description="Helical" evidence="1">
    <location>
        <begin position="382"/>
        <end position="402"/>
    </location>
</feature>
<feature type="transmembrane region" description="Helical" evidence="1">
    <location>
        <begin position="410"/>
        <end position="430"/>
    </location>
</feature>
<feature type="transmembrane region" description="Helical" evidence="1">
    <location>
        <begin position="446"/>
        <end position="466"/>
    </location>
</feature>
<keyword id="KW-1003">Cell membrane</keyword>
<keyword id="KW-0472">Membrane</keyword>
<keyword id="KW-1185">Reference proteome</keyword>
<keyword id="KW-0812">Transmembrane</keyword>
<keyword id="KW-1133">Transmembrane helix</keyword>
<keyword id="KW-0813">Transport</keyword>
<sequence length="505" mass="55468">MLVSLSLSSLLTLFFIMLMASGISGLLFLHPRVPLSFVRIHIGILALPLLVSLLILANSGVSGNVGPWHLDSLACLMTFFVLAIGFIIQRFSVRYLMGDRSYRKYFTLFTFTTGAASMTWLSGDLRLMVLFWGATLVGLTLLIRLNSAWQVASEAAKISGRLFLLSWFSLFFAMMWLFHATGQWQLSLVVTNESLAGLGEWERTGIQLLIVLAVIIPAAQWPFQRWLVESIVAPTPVSAIMHAGLVNAGGIILTRFSPLFHGGIASIILLLLASISVLIGTGISLVQVDYKRQLVGSTIGQMGFMLIQCALGAYIAAIIHLILHGLFKATLFLQAGSAVGRHEVSTRTNERTSYLWVMAGRILSLVIGVAFWLTAPGDGYHLISALILGWSLSVSWDQLVAFGEGRIGRIAGLTVLGGAALVYFIIHHLFYKWLHTTIFQSVQPPMSAVMIVVCLLLFGSALGTWVARHRSSVFFAVLYLWLVRLGEAKPKSVESHPDYLKQYIS</sequence>
<name>DABB_BACSU</name>
<proteinExistence type="inferred from homology"/>
<gene>
    <name evidence="1" type="primary">dabB</name>
    <name type="synonym">ndhF</name>
    <name type="synonym">ybxE</name>
    <name type="ordered locus">BSU01830</name>
</gene>
<accession>P39755</accession>
<protein>
    <recommendedName>
        <fullName evidence="1">Probable inorganic carbon transporter subunit DabB</fullName>
    </recommendedName>
</protein>
<reference key="1">
    <citation type="journal article" date="1995" name="Mutat. Res.">
        <title>Diverse capacities for the adaptive response to DNA alkylation in Bacillus species and strains.</title>
        <authorList>
            <person name="Morohoshi F."/>
            <person name="Munakata N."/>
        </authorList>
    </citation>
    <scope>NUCLEOTIDE SEQUENCE [GENOMIC DNA]</scope>
    <source>
        <strain>168</strain>
    </source>
</reference>
<reference key="2">
    <citation type="submission" date="1997-07" db="EMBL/GenBank/DDBJ databases">
        <title>Sequence analysis of the 70kb region between 17 and 23 degree of the Bacillus subtilis chromosome.</title>
        <authorList>
            <person name="Haga K."/>
            <person name="Liu H."/>
            <person name="Yasumoto K."/>
            <person name="Takahashi H."/>
            <person name="Yoshikawa H."/>
        </authorList>
    </citation>
    <scope>NUCLEOTIDE SEQUENCE [GENOMIC DNA]</scope>
    <source>
        <strain>168</strain>
    </source>
</reference>
<reference key="3">
    <citation type="journal article" date="1997" name="Nature">
        <title>The complete genome sequence of the Gram-positive bacterium Bacillus subtilis.</title>
        <authorList>
            <person name="Kunst F."/>
            <person name="Ogasawara N."/>
            <person name="Moszer I."/>
            <person name="Albertini A.M."/>
            <person name="Alloni G."/>
            <person name="Azevedo V."/>
            <person name="Bertero M.G."/>
            <person name="Bessieres P."/>
            <person name="Bolotin A."/>
            <person name="Borchert S."/>
            <person name="Borriss R."/>
            <person name="Boursier L."/>
            <person name="Brans A."/>
            <person name="Braun M."/>
            <person name="Brignell S.C."/>
            <person name="Bron S."/>
            <person name="Brouillet S."/>
            <person name="Bruschi C.V."/>
            <person name="Caldwell B."/>
            <person name="Capuano V."/>
            <person name="Carter N.M."/>
            <person name="Choi S.-K."/>
            <person name="Codani J.-J."/>
            <person name="Connerton I.F."/>
            <person name="Cummings N.J."/>
            <person name="Daniel R.A."/>
            <person name="Denizot F."/>
            <person name="Devine K.M."/>
            <person name="Duesterhoeft A."/>
            <person name="Ehrlich S.D."/>
            <person name="Emmerson P.T."/>
            <person name="Entian K.-D."/>
            <person name="Errington J."/>
            <person name="Fabret C."/>
            <person name="Ferrari E."/>
            <person name="Foulger D."/>
            <person name="Fritz C."/>
            <person name="Fujita M."/>
            <person name="Fujita Y."/>
            <person name="Fuma S."/>
            <person name="Galizzi A."/>
            <person name="Galleron N."/>
            <person name="Ghim S.-Y."/>
            <person name="Glaser P."/>
            <person name="Goffeau A."/>
            <person name="Golightly E.J."/>
            <person name="Grandi G."/>
            <person name="Guiseppi G."/>
            <person name="Guy B.J."/>
            <person name="Haga K."/>
            <person name="Haiech J."/>
            <person name="Harwood C.R."/>
            <person name="Henaut A."/>
            <person name="Hilbert H."/>
            <person name="Holsappel S."/>
            <person name="Hosono S."/>
            <person name="Hullo M.-F."/>
            <person name="Itaya M."/>
            <person name="Jones L.-M."/>
            <person name="Joris B."/>
            <person name="Karamata D."/>
            <person name="Kasahara Y."/>
            <person name="Klaerr-Blanchard M."/>
            <person name="Klein C."/>
            <person name="Kobayashi Y."/>
            <person name="Koetter P."/>
            <person name="Koningstein G."/>
            <person name="Krogh S."/>
            <person name="Kumano M."/>
            <person name="Kurita K."/>
            <person name="Lapidus A."/>
            <person name="Lardinois S."/>
            <person name="Lauber J."/>
            <person name="Lazarevic V."/>
            <person name="Lee S.-M."/>
            <person name="Levine A."/>
            <person name="Liu H."/>
            <person name="Masuda S."/>
            <person name="Mauel C."/>
            <person name="Medigue C."/>
            <person name="Medina N."/>
            <person name="Mellado R.P."/>
            <person name="Mizuno M."/>
            <person name="Moestl D."/>
            <person name="Nakai S."/>
            <person name="Noback M."/>
            <person name="Noone D."/>
            <person name="O'Reilly M."/>
            <person name="Ogawa K."/>
            <person name="Ogiwara A."/>
            <person name="Oudega B."/>
            <person name="Park S.-H."/>
            <person name="Parro V."/>
            <person name="Pohl T.M."/>
            <person name="Portetelle D."/>
            <person name="Porwollik S."/>
            <person name="Prescott A.M."/>
            <person name="Presecan E."/>
            <person name="Pujic P."/>
            <person name="Purnelle B."/>
            <person name="Rapoport G."/>
            <person name="Rey M."/>
            <person name="Reynolds S."/>
            <person name="Rieger M."/>
            <person name="Rivolta C."/>
            <person name="Rocha E."/>
            <person name="Roche B."/>
            <person name="Rose M."/>
            <person name="Sadaie Y."/>
            <person name="Sato T."/>
            <person name="Scanlan E."/>
            <person name="Schleich S."/>
            <person name="Schroeter R."/>
            <person name="Scoffone F."/>
            <person name="Sekiguchi J."/>
            <person name="Sekowska A."/>
            <person name="Seror S.J."/>
            <person name="Serror P."/>
            <person name="Shin B.-S."/>
            <person name="Soldo B."/>
            <person name="Sorokin A."/>
            <person name="Tacconi E."/>
            <person name="Takagi T."/>
            <person name="Takahashi H."/>
            <person name="Takemaru K."/>
            <person name="Takeuchi M."/>
            <person name="Tamakoshi A."/>
            <person name="Tanaka T."/>
            <person name="Terpstra P."/>
            <person name="Tognoni A."/>
            <person name="Tosato V."/>
            <person name="Uchiyama S."/>
            <person name="Vandenbol M."/>
            <person name="Vannier F."/>
            <person name="Vassarotti A."/>
            <person name="Viari A."/>
            <person name="Wambutt R."/>
            <person name="Wedler E."/>
            <person name="Wedler H."/>
            <person name="Weitzenegger T."/>
            <person name="Winters P."/>
            <person name="Wipat A."/>
            <person name="Yamamoto H."/>
            <person name="Yamane K."/>
            <person name="Yasumoto K."/>
            <person name="Yata K."/>
            <person name="Yoshida K."/>
            <person name="Yoshikawa H.-F."/>
            <person name="Zumstein E."/>
            <person name="Yoshikawa H."/>
            <person name="Danchin A."/>
        </authorList>
    </citation>
    <scope>NUCLEOTIDE SEQUENCE [LARGE SCALE GENOMIC DNA]</scope>
    <source>
        <strain>168</strain>
    </source>
</reference>
<reference key="4">
    <citation type="submission" date="1993-10" db="EMBL/GenBank/DDBJ databases">
        <authorList>
            <person name="Morohoshi F."/>
            <person name="Munakata N."/>
        </authorList>
    </citation>
    <scope>NUCLEOTIDE SEQUENCE [GENOMIC DNA] OF 1-91</scope>
    <source>
        <strain>168</strain>
    </source>
</reference>
<dbReference type="EMBL" id="U28323">
    <property type="protein sequence ID" value="AAA70186.1"/>
    <property type="molecule type" value="Genomic_DNA"/>
</dbReference>
<dbReference type="EMBL" id="AB006424">
    <property type="protein sequence ID" value="BAA33076.1"/>
    <property type="molecule type" value="Genomic_DNA"/>
</dbReference>
<dbReference type="EMBL" id="AL009126">
    <property type="protein sequence ID" value="CAB11959.1"/>
    <property type="molecule type" value="Genomic_DNA"/>
</dbReference>
<dbReference type="EMBL" id="D21197">
    <property type="protein sequence ID" value="BAA21007.1"/>
    <property type="molecule type" value="Genomic_DNA"/>
</dbReference>
<dbReference type="PIR" id="C69666">
    <property type="entry name" value="C69666"/>
</dbReference>
<dbReference type="RefSeq" id="NP_388064.1">
    <property type="nucleotide sequence ID" value="NC_000964.3"/>
</dbReference>
<dbReference type="RefSeq" id="WP_003234919.1">
    <property type="nucleotide sequence ID" value="NZ_OZ025638.1"/>
</dbReference>
<dbReference type="SMR" id="P39755"/>
<dbReference type="FunCoup" id="P39755">
    <property type="interactions" value="68"/>
</dbReference>
<dbReference type="STRING" id="224308.BSU01830"/>
<dbReference type="PaxDb" id="224308-BSU01830"/>
<dbReference type="EnsemblBacteria" id="CAB11959">
    <property type="protein sequence ID" value="CAB11959"/>
    <property type="gene ID" value="BSU_01830"/>
</dbReference>
<dbReference type="GeneID" id="938593"/>
<dbReference type="KEGG" id="bsu:BSU01830"/>
<dbReference type="PATRIC" id="fig|224308.179.peg.189"/>
<dbReference type="eggNOG" id="COG1009">
    <property type="taxonomic scope" value="Bacteria"/>
</dbReference>
<dbReference type="InParanoid" id="P39755"/>
<dbReference type="OrthoDB" id="9807568at2"/>
<dbReference type="PhylomeDB" id="P39755"/>
<dbReference type="BioCyc" id="BSUB:BSU01830-MONOMER"/>
<dbReference type="Proteomes" id="UP000001570">
    <property type="component" value="Chromosome"/>
</dbReference>
<dbReference type="GO" id="GO:0005886">
    <property type="term" value="C:plasma membrane"/>
    <property type="evidence" value="ECO:0007669"/>
    <property type="project" value="UniProtKB-SubCell"/>
</dbReference>
<dbReference type="GO" id="GO:0008137">
    <property type="term" value="F:NADH dehydrogenase (ubiquinone) activity"/>
    <property type="evidence" value="ECO:0007669"/>
    <property type="project" value="InterPro"/>
</dbReference>
<dbReference type="GO" id="GO:0050136">
    <property type="term" value="F:NADH:ubiquinone reductase (non-electrogenic) activity"/>
    <property type="evidence" value="ECO:0007669"/>
    <property type="project" value="UniProtKB-EC"/>
</dbReference>
<dbReference type="GO" id="GO:0042773">
    <property type="term" value="P:ATP synthesis coupled electron transport"/>
    <property type="evidence" value="ECO:0007669"/>
    <property type="project" value="InterPro"/>
</dbReference>
<dbReference type="GO" id="GO:0015990">
    <property type="term" value="P:electron transport coupled proton transport"/>
    <property type="evidence" value="ECO:0000318"/>
    <property type="project" value="GO_Central"/>
</dbReference>
<dbReference type="HAMAP" id="MF_00862">
    <property type="entry name" value="DabB"/>
    <property type="match status" value="1"/>
</dbReference>
<dbReference type="InterPro" id="IPR001750">
    <property type="entry name" value="ND/Mrp_TM"/>
</dbReference>
<dbReference type="InterPro" id="IPR003945">
    <property type="entry name" value="NU5C-like"/>
</dbReference>
<dbReference type="InterPro" id="IPR001516">
    <property type="entry name" value="Proton_antipo_N"/>
</dbReference>
<dbReference type="InterPro" id="IPR046396">
    <property type="entry name" value="Transporter_DabB"/>
</dbReference>
<dbReference type="NCBIfam" id="NF006373">
    <property type="entry name" value="PRK08601.1"/>
    <property type="match status" value="1"/>
</dbReference>
<dbReference type="PANTHER" id="PTHR42829:SF1">
    <property type="entry name" value="INORGANIC CARBON TRANSPORTER SUBUNIT DABB-RELATED"/>
    <property type="match status" value="1"/>
</dbReference>
<dbReference type="PANTHER" id="PTHR42829">
    <property type="entry name" value="NADH-UBIQUINONE OXIDOREDUCTASE CHAIN 5"/>
    <property type="match status" value="1"/>
</dbReference>
<dbReference type="Pfam" id="PF00361">
    <property type="entry name" value="Proton_antipo_M"/>
    <property type="match status" value="1"/>
</dbReference>
<dbReference type="Pfam" id="PF00662">
    <property type="entry name" value="Proton_antipo_N"/>
    <property type="match status" value="1"/>
</dbReference>
<dbReference type="PRINTS" id="PR01434">
    <property type="entry name" value="NADHDHGNASE5"/>
</dbReference>